<organism>
    <name type="scientific">Francisella tularensis subsp. tularensis (strain FSC 198)</name>
    <dbReference type="NCBI Taxonomy" id="393115"/>
    <lineage>
        <taxon>Bacteria</taxon>
        <taxon>Pseudomonadati</taxon>
        <taxon>Pseudomonadota</taxon>
        <taxon>Gammaproteobacteria</taxon>
        <taxon>Thiotrichales</taxon>
        <taxon>Francisellaceae</taxon>
        <taxon>Francisella</taxon>
    </lineage>
</organism>
<sequence length="628" mass="72349">MSEKKYTFETEVDKLLHLVIHSLYSNREIFLRELVSNSSDAIEKLRYESISNAALNEDDTDYAIRIDFDKDAKTITVSDNGIGMTEEEVIENLGTIAKSGTKKFLESLTGDKSKDNELIGQFGVGFYSSFIVADKVTVRTRKAGQDKSQATKWVSDAQNGFTVETITKEKRGTEVILHIKKEHLDLLEYHVLKGLVNKYSDCINTSIQMKKVEYDKDGKQTVKDEYETVNNTKAIWLRSKDEVTDEEYQEFYKYISHDFADALMWIHNKVEGNLEYNSLLYIPQNKPFDFWNRDKDYGLSLYVRRVFIMENKELLPPYLRFVKGVIDSADLPLNVSREILQHNKVIDKIKKAITTKILSELKKLASKDKEKYQKFWDSFGQVLKEGVSDDYSNKEKIAGLLRFATTQSGDSKQTVSLADYISRMKEGQDTIYYITSDSYKAAANNPQLEAFKKKGIEVILMTDRIDEWMMSTLTEFDGKHMKSIIKGDIDLDRFETPENKEKFEKEAKDFEKVLKEIKEVLKDKVEDVRLSKRLTDSPSCVVVNDYGMSLHMQKMMEEAGQSFMPGMGMKPILELNAEHNLVQKLKNEADTEIFADLSELLLLQAMFVEGAKIEDPMAFVKLVNKYIR</sequence>
<accession>Q14J90</accession>
<proteinExistence type="inferred from homology"/>
<evidence type="ECO:0000255" key="1">
    <source>
        <dbReference type="HAMAP-Rule" id="MF_00505"/>
    </source>
</evidence>
<comment type="function">
    <text evidence="1">Molecular chaperone. Has ATPase activity.</text>
</comment>
<comment type="subunit">
    <text evidence="1">Homodimer.</text>
</comment>
<comment type="subcellular location">
    <subcellularLocation>
        <location evidence="1">Cytoplasm</location>
    </subcellularLocation>
</comment>
<comment type="similarity">
    <text evidence="1">Belongs to the heat shock protein 90 family.</text>
</comment>
<name>HTPG_FRAT1</name>
<reference key="1">
    <citation type="journal article" date="2007" name="PLoS ONE">
        <title>Genome sequencing shows that European isolates of Francisella tularensis subspecies tularensis are almost identical to US laboratory strain Schu S4.</title>
        <authorList>
            <person name="Chaudhuri R.R."/>
            <person name="Ren C.-P."/>
            <person name="Desmond L."/>
            <person name="Vincent G.A."/>
            <person name="Silman N.J."/>
            <person name="Brehm J.K."/>
            <person name="Elmore M.J."/>
            <person name="Hudson M.J."/>
            <person name="Forsman M."/>
            <person name="Isherwood K.E."/>
            <person name="Gurycova D."/>
            <person name="Minton N.P."/>
            <person name="Titball R.W."/>
            <person name="Pallen M.J."/>
            <person name="Vipond R."/>
        </authorList>
    </citation>
    <scope>NUCLEOTIDE SEQUENCE [LARGE SCALE GENOMIC DNA]</scope>
    <source>
        <strain>FSC 198</strain>
    </source>
</reference>
<keyword id="KW-0067">ATP-binding</keyword>
<keyword id="KW-0143">Chaperone</keyword>
<keyword id="KW-0963">Cytoplasm</keyword>
<keyword id="KW-0547">Nucleotide-binding</keyword>
<keyword id="KW-0346">Stress response</keyword>
<gene>
    <name evidence="1" type="primary">htpG</name>
    <name type="ordered locus">FTF0356</name>
</gene>
<feature type="chain" id="PRO_1000014916" description="Chaperone protein HtpG">
    <location>
        <begin position="1"/>
        <end position="628"/>
    </location>
</feature>
<feature type="region of interest" description="A; substrate-binding" evidence="1">
    <location>
        <begin position="1"/>
        <end position="337"/>
    </location>
</feature>
<feature type="region of interest" description="B" evidence="1">
    <location>
        <begin position="338"/>
        <end position="554"/>
    </location>
</feature>
<feature type="region of interest" description="C" evidence="1">
    <location>
        <begin position="555"/>
        <end position="628"/>
    </location>
</feature>
<dbReference type="EMBL" id="AM286280">
    <property type="protein sequence ID" value="CAL08372.1"/>
    <property type="molecule type" value="Genomic_DNA"/>
</dbReference>
<dbReference type="RefSeq" id="WP_003020060.1">
    <property type="nucleotide sequence ID" value="NC_008245.1"/>
</dbReference>
<dbReference type="SMR" id="Q14J90"/>
<dbReference type="KEGG" id="ftf:FTF0356"/>
<dbReference type="HOGENOM" id="CLU_006684_3_0_6"/>
<dbReference type="GO" id="GO:0005737">
    <property type="term" value="C:cytoplasm"/>
    <property type="evidence" value="ECO:0007669"/>
    <property type="project" value="UniProtKB-SubCell"/>
</dbReference>
<dbReference type="GO" id="GO:0005524">
    <property type="term" value="F:ATP binding"/>
    <property type="evidence" value="ECO:0007669"/>
    <property type="project" value="UniProtKB-UniRule"/>
</dbReference>
<dbReference type="GO" id="GO:0016887">
    <property type="term" value="F:ATP hydrolysis activity"/>
    <property type="evidence" value="ECO:0007669"/>
    <property type="project" value="InterPro"/>
</dbReference>
<dbReference type="GO" id="GO:0140662">
    <property type="term" value="F:ATP-dependent protein folding chaperone"/>
    <property type="evidence" value="ECO:0007669"/>
    <property type="project" value="InterPro"/>
</dbReference>
<dbReference type="GO" id="GO:0051082">
    <property type="term" value="F:unfolded protein binding"/>
    <property type="evidence" value="ECO:0007669"/>
    <property type="project" value="UniProtKB-UniRule"/>
</dbReference>
<dbReference type="CDD" id="cd16927">
    <property type="entry name" value="HATPase_Hsp90-like"/>
    <property type="match status" value="1"/>
</dbReference>
<dbReference type="FunFam" id="3.30.230.80:FF:000002">
    <property type="entry name" value="Molecular chaperone HtpG"/>
    <property type="match status" value="1"/>
</dbReference>
<dbReference type="FunFam" id="3.30.565.10:FF:000009">
    <property type="entry name" value="Molecular chaperone HtpG"/>
    <property type="match status" value="1"/>
</dbReference>
<dbReference type="Gene3D" id="3.30.230.80">
    <property type="match status" value="1"/>
</dbReference>
<dbReference type="Gene3D" id="3.40.50.11260">
    <property type="match status" value="1"/>
</dbReference>
<dbReference type="Gene3D" id="1.20.120.790">
    <property type="entry name" value="Heat shock protein 90, C-terminal domain"/>
    <property type="match status" value="1"/>
</dbReference>
<dbReference type="Gene3D" id="3.30.565.10">
    <property type="entry name" value="Histidine kinase-like ATPase, C-terminal domain"/>
    <property type="match status" value="1"/>
</dbReference>
<dbReference type="HAMAP" id="MF_00505">
    <property type="entry name" value="HSP90"/>
    <property type="match status" value="1"/>
</dbReference>
<dbReference type="InterPro" id="IPR036890">
    <property type="entry name" value="HATPase_C_sf"/>
</dbReference>
<dbReference type="InterPro" id="IPR019805">
    <property type="entry name" value="Heat_shock_protein_90_CS"/>
</dbReference>
<dbReference type="InterPro" id="IPR037196">
    <property type="entry name" value="HSP90_C"/>
</dbReference>
<dbReference type="InterPro" id="IPR001404">
    <property type="entry name" value="Hsp90_fam"/>
</dbReference>
<dbReference type="InterPro" id="IPR020575">
    <property type="entry name" value="Hsp90_N"/>
</dbReference>
<dbReference type="InterPro" id="IPR020568">
    <property type="entry name" value="Ribosomal_Su5_D2-typ_SF"/>
</dbReference>
<dbReference type="NCBIfam" id="NF003555">
    <property type="entry name" value="PRK05218.1"/>
    <property type="match status" value="1"/>
</dbReference>
<dbReference type="PANTHER" id="PTHR11528">
    <property type="entry name" value="HEAT SHOCK PROTEIN 90 FAMILY MEMBER"/>
    <property type="match status" value="1"/>
</dbReference>
<dbReference type="Pfam" id="PF13589">
    <property type="entry name" value="HATPase_c_3"/>
    <property type="match status" value="1"/>
</dbReference>
<dbReference type="Pfam" id="PF00183">
    <property type="entry name" value="HSP90"/>
    <property type="match status" value="1"/>
</dbReference>
<dbReference type="PIRSF" id="PIRSF002583">
    <property type="entry name" value="Hsp90"/>
    <property type="match status" value="1"/>
</dbReference>
<dbReference type="PRINTS" id="PR00775">
    <property type="entry name" value="HEATSHOCK90"/>
</dbReference>
<dbReference type="SMART" id="SM00387">
    <property type="entry name" value="HATPase_c"/>
    <property type="match status" value="1"/>
</dbReference>
<dbReference type="SUPFAM" id="SSF55874">
    <property type="entry name" value="ATPase domain of HSP90 chaperone/DNA topoisomerase II/histidine kinase"/>
    <property type="match status" value="1"/>
</dbReference>
<dbReference type="SUPFAM" id="SSF110942">
    <property type="entry name" value="HSP90 C-terminal domain"/>
    <property type="match status" value="1"/>
</dbReference>
<dbReference type="SUPFAM" id="SSF54211">
    <property type="entry name" value="Ribosomal protein S5 domain 2-like"/>
    <property type="match status" value="1"/>
</dbReference>
<dbReference type="PROSITE" id="PS00298">
    <property type="entry name" value="HSP90"/>
    <property type="match status" value="1"/>
</dbReference>
<protein>
    <recommendedName>
        <fullName evidence="1">Chaperone protein HtpG</fullName>
    </recommendedName>
    <alternativeName>
        <fullName evidence="1">Heat shock protein HtpG</fullName>
    </alternativeName>
    <alternativeName>
        <fullName evidence="1">High temperature protein G</fullName>
    </alternativeName>
</protein>